<keyword id="KW-0687">Ribonucleoprotein</keyword>
<keyword id="KW-0689">Ribosomal protein</keyword>
<keyword id="KW-0694">RNA-binding</keyword>
<keyword id="KW-0699">rRNA-binding</keyword>
<name>RS6_SHEHH</name>
<protein>
    <recommendedName>
        <fullName evidence="1">Small ribosomal subunit protein bS6</fullName>
    </recommendedName>
    <alternativeName>
        <fullName evidence="3">30S ribosomal protein S6</fullName>
    </alternativeName>
</protein>
<feature type="chain" id="PRO_1000079466" description="Small ribosomal subunit protein bS6">
    <location>
        <begin position="1"/>
        <end position="137"/>
    </location>
</feature>
<feature type="region of interest" description="Disordered" evidence="2">
    <location>
        <begin position="96"/>
        <end position="137"/>
    </location>
</feature>
<feature type="compositionally biased region" description="Basic and acidic residues" evidence="2">
    <location>
        <begin position="104"/>
        <end position="124"/>
    </location>
</feature>
<feature type="compositionally biased region" description="Acidic residues" evidence="2">
    <location>
        <begin position="125"/>
        <end position="137"/>
    </location>
</feature>
<evidence type="ECO:0000255" key="1">
    <source>
        <dbReference type="HAMAP-Rule" id="MF_00360"/>
    </source>
</evidence>
<evidence type="ECO:0000256" key="2">
    <source>
        <dbReference type="SAM" id="MobiDB-lite"/>
    </source>
</evidence>
<evidence type="ECO:0000305" key="3"/>
<reference key="1">
    <citation type="submission" date="2008-01" db="EMBL/GenBank/DDBJ databases">
        <title>Complete sequence of Shewanella halifaxensis HAW-EB4.</title>
        <authorList>
            <consortium name="US DOE Joint Genome Institute"/>
            <person name="Copeland A."/>
            <person name="Lucas S."/>
            <person name="Lapidus A."/>
            <person name="Glavina del Rio T."/>
            <person name="Dalin E."/>
            <person name="Tice H."/>
            <person name="Bruce D."/>
            <person name="Goodwin L."/>
            <person name="Pitluck S."/>
            <person name="Sims D."/>
            <person name="Brettin T."/>
            <person name="Detter J.C."/>
            <person name="Han C."/>
            <person name="Kuske C.R."/>
            <person name="Schmutz J."/>
            <person name="Larimer F."/>
            <person name="Land M."/>
            <person name="Hauser L."/>
            <person name="Kyrpides N."/>
            <person name="Kim E."/>
            <person name="Zhao J.-S."/>
            <person name="Richardson P."/>
        </authorList>
    </citation>
    <scope>NUCLEOTIDE SEQUENCE [LARGE SCALE GENOMIC DNA]</scope>
    <source>
        <strain>HAW-EB4</strain>
    </source>
</reference>
<comment type="function">
    <text evidence="1">Binds together with bS18 to 16S ribosomal RNA.</text>
</comment>
<comment type="similarity">
    <text evidence="1">Belongs to the bacterial ribosomal protein bS6 family.</text>
</comment>
<gene>
    <name evidence="1" type="primary">rpsF</name>
    <name type="ordered locus">Shal_3675</name>
</gene>
<accession>B0TUU9</accession>
<proteinExistence type="inferred from homology"/>
<sequence length="137" mass="15639">MRHYEIVFLVHPDQSEQVPGMIERYTGILTQAGGQIHRLEDWGRRQLAYPIIELHKAHYVLLNVETTAEAVEELETAFRFNDAVLRSMVMRTKAAITEASPMAKAKDERDTRRSSEERAPRAEAAEEVEESAENTAE</sequence>
<organism>
    <name type="scientific">Shewanella halifaxensis (strain HAW-EB4)</name>
    <dbReference type="NCBI Taxonomy" id="458817"/>
    <lineage>
        <taxon>Bacteria</taxon>
        <taxon>Pseudomonadati</taxon>
        <taxon>Pseudomonadota</taxon>
        <taxon>Gammaproteobacteria</taxon>
        <taxon>Alteromonadales</taxon>
        <taxon>Shewanellaceae</taxon>
        <taxon>Shewanella</taxon>
    </lineage>
</organism>
<dbReference type="EMBL" id="CP000931">
    <property type="protein sequence ID" value="ABZ78216.1"/>
    <property type="molecule type" value="Genomic_DNA"/>
</dbReference>
<dbReference type="RefSeq" id="WP_012278734.1">
    <property type="nucleotide sequence ID" value="NC_010334.1"/>
</dbReference>
<dbReference type="SMR" id="B0TUU9"/>
<dbReference type="STRING" id="458817.Shal_3675"/>
<dbReference type="KEGG" id="shl:Shal_3675"/>
<dbReference type="eggNOG" id="COG0360">
    <property type="taxonomic scope" value="Bacteria"/>
</dbReference>
<dbReference type="HOGENOM" id="CLU_113441_6_1_6"/>
<dbReference type="OrthoDB" id="9812702at2"/>
<dbReference type="Proteomes" id="UP000001317">
    <property type="component" value="Chromosome"/>
</dbReference>
<dbReference type="GO" id="GO:0022627">
    <property type="term" value="C:cytosolic small ribosomal subunit"/>
    <property type="evidence" value="ECO:0007669"/>
    <property type="project" value="TreeGrafter"/>
</dbReference>
<dbReference type="GO" id="GO:0070181">
    <property type="term" value="F:small ribosomal subunit rRNA binding"/>
    <property type="evidence" value="ECO:0007669"/>
    <property type="project" value="TreeGrafter"/>
</dbReference>
<dbReference type="GO" id="GO:0003735">
    <property type="term" value="F:structural constituent of ribosome"/>
    <property type="evidence" value="ECO:0007669"/>
    <property type="project" value="InterPro"/>
</dbReference>
<dbReference type="GO" id="GO:0006412">
    <property type="term" value="P:translation"/>
    <property type="evidence" value="ECO:0007669"/>
    <property type="project" value="UniProtKB-UniRule"/>
</dbReference>
<dbReference type="CDD" id="cd00473">
    <property type="entry name" value="bS6"/>
    <property type="match status" value="1"/>
</dbReference>
<dbReference type="FunFam" id="3.30.70.60:FF:000003">
    <property type="entry name" value="30S ribosomal protein S6"/>
    <property type="match status" value="1"/>
</dbReference>
<dbReference type="Gene3D" id="3.30.70.60">
    <property type="match status" value="1"/>
</dbReference>
<dbReference type="HAMAP" id="MF_00360">
    <property type="entry name" value="Ribosomal_bS6"/>
    <property type="match status" value="1"/>
</dbReference>
<dbReference type="InterPro" id="IPR000529">
    <property type="entry name" value="Ribosomal_bS6"/>
</dbReference>
<dbReference type="InterPro" id="IPR035980">
    <property type="entry name" value="Ribosomal_bS6_sf"/>
</dbReference>
<dbReference type="InterPro" id="IPR020814">
    <property type="entry name" value="Ribosomal_S6_plastid/chlpt"/>
</dbReference>
<dbReference type="InterPro" id="IPR014717">
    <property type="entry name" value="Transl_elong_EF1B/ribsomal_bS6"/>
</dbReference>
<dbReference type="NCBIfam" id="TIGR00166">
    <property type="entry name" value="S6"/>
    <property type="match status" value="1"/>
</dbReference>
<dbReference type="PANTHER" id="PTHR21011">
    <property type="entry name" value="MITOCHONDRIAL 28S RIBOSOMAL PROTEIN S6"/>
    <property type="match status" value="1"/>
</dbReference>
<dbReference type="PANTHER" id="PTHR21011:SF1">
    <property type="entry name" value="SMALL RIBOSOMAL SUBUNIT PROTEIN BS6M"/>
    <property type="match status" value="1"/>
</dbReference>
<dbReference type="Pfam" id="PF01250">
    <property type="entry name" value="Ribosomal_S6"/>
    <property type="match status" value="1"/>
</dbReference>
<dbReference type="SUPFAM" id="SSF54995">
    <property type="entry name" value="Ribosomal protein S6"/>
    <property type="match status" value="1"/>
</dbReference>